<reference key="1">
    <citation type="journal article" date="2003" name="Genome Res.">
        <title>Comparative genome analysis of Vibrio vulnificus, a marine pathogen.</title>
        <authorList>
            <person name="Chen C.-Y."/>
            <person name="Wu K.-M."/>
            <person name="Chang Y.-C."/>
            <person name="Chang C.-H."/>
            <person name="Tsai H.-C."/>
            <person name="Liao T.-L."/>
            <person name="Liu Y.-M."/>
            <person name="Chen H.-J."/>
            <person name="Shen A.B.-T."/>
            <person name="Li J.-C."/>
            <person name="Su T.-L."/>
            <person name="Shao C.-P."/>
            <person name="Lee C.-T."/>
            <person name="Hor L.-I."/>
            <person name="Tsai S.-F."/>
        </authorList>
    </citation>
    <scope>NUCLEOTIDE SEQUENCE [LARGE SCALE GENOMIC DNA]</scope>
    <source>
        <strain>YJ016</strain>
    </source>
</reference>
<gene>
    <name type="ordered locus">VVA0515</name>
</gene>
<accession>Q7MF05</accession>
<proteinExistence type="inferred from homology"/>
<dbReference type="EC" id="2.7.11.33" evidence="1"/>
<dbReference type="EC" id="2.7.4.28" evidence="1"/>
<dbReference type="EMBL" id="BA000038">
    <property type="protein sequence ID" value="BAC96541.1"/>
    <property type="molecule type" value="Genomic_DNA"/>
</dbReference>
<dbReference type="RefSeq" id="WP_011081001.1">
    <property type="nucleotide sequence ID" value="NC_005140.1"/>
</dbReference>
<dbReference type="SMR" id="Q7MF05"/>
<dbReference type="STRING" id="672.VV93_v1c35220"/>
<dbReference type="KEGG" id="vvy:VVA0515"/>
<dbReference type="eggNOG" id="COG1806">
    <property type="taxonomic scope" value="Bacteria"/>
</dbReference>
<dbReference type="HOGENOM" id="CLU_046206_1_0_6"/>
<dbReference type="Proteomes" id="UP000002675">
    <property type="component" value="Chromosome II"/>
</dbReference>
<dbReference type="GO" id="GO:0043531">
    <property type="term" value="F:ADP binding"/>
    <property type="evidence" value="ECO:0007669"/>
    <property type="project" value="UniProtKB-UniRule"/>
</dbReference>
<dbReference type="GO" id="GO:0005524">
    <property type="term" value="F:ATP binding"/>
    <property type="evidence" value="ECO:0007669"/>
    <property type="project" value="InterPro"/>
</dbReference>
<dbReference type="GO" id="GO:0016776">
    <property type="term" value="F:phosphotransferase activity, phosphate group as acceptor"/>
    <property type="evidence" value="ECO:0007669"/>
    <property type="project" value="UniProtKB-UniRule"/>
</dbReference>
<dbReference type="GO" id="GO:0004674">
    <property type="term" value="F:protein serine/threonine kinase activity"/>
    <property type="evidence" value="ECO:0007669"/>
    <property type="project" value="UniProtKB-UniRule"/>
</dbReference>
<dbReference type="HAMAP" id="MF_01062">
    <property type="entry name" value="PSRP"/>
    <property type="match status" value="1"/>
</dbReference>
<dbReference type="InterPro" id="IPR005177">
    <property type="entry name" value="Kinase-pyrophosphorylase"/>
</dbReference>
<dbReference type="InterPro" id="IPR026530">
    <property type="entry name" value="PSRP"/>
</dbReference>
<dbReference type="NCBIfam" id="NF003742">
    <property type="entry name" value="PRK05339.1"/>
    <property type="match status" value="1"/>
</dbReference>
<dbReference type="PANTHER" id="PTHR31756">
    <property type="entry name" value="PYRUVATE, PHOSPHATE DIKINASE REGULATORY PROTEIN 1, CHLOROPLASTIC"/>
    <property type="match status" value="1"/>
</dbReference>
<dbReference type="PANTHER" id="PTHR31756:SF3">
    <property type="entry name" value="PYRUVATE, PHOSPHATE DIKINASE REGULATORY PROTEIN 1, CHLOROPLASTIC"/>
    <property type="match status" value="1"/>
</dbReference>
<dbReference type="Pfam" id="PF03618">
    <property type="entry name" value="Kinase-PPPase"/>
    <property type="match status" value="1"/>
</dbReference>
<feature type="chain" id="PRO_0000196739" description="Putative phosphoenolpyruvate synthase regulatory protein">
    <location>
        <begin position="1"/>
        <end position="277"/>
    </location>
</feature>
<feature type="binding site" evidence="1">
    <location>
        <begin position="157"/>
        <end position="164"/>
    </location>
    <ligand>
        <name>ADP</name>
        <dbReference type="ChEBI" id="CHEBI:456216"/>
    </ligand>
</feature>
<name>PSRP_VIBVY</name>
<keyword id="KW-0418">Kinase</keyword>
<keyword id="KW-0547">Nucleotide-binding</keyword>
<keyword id="KW-0723">Serine/threonine-protein kinase</keyword>
<keyword id="KW-0808">Transferase</keyword>
<sequence length="277" mass="31572">MQTEKQSRDVFYVSDGTAITCETLGHVVLGQFPFVANEKTFPFVESEEKLTELIKHIEISFQTNGIKPLVFFSLVLPDLKARLMESPAYCYDVLESIVQRVKDDIQMEPTPKLQRSRSVGKDTDTYFDRIAAIEYTLAHDDGISLKGLELADIILLGVSRSGKTPTSLYMAMQFGLRVVNYPYIDDDIKGLKLLPEFEIHRHKLFGLTIDPERLTEIRENRLAGSDYASTEQCQHELANVEALFRREAIPYINTTSLSVEEISTRVLEKTGLKRRLF</sequence>
<organism>
    <name type="scientific">Vibrio vulnificus (strain YJ016)</name>
    <dbReference type="NCBI Taxonomy" id="196600"/>
    <lineage>
        <taxon>Bacteria</taxon>
        <taxon>Pseudomonadati</taxon>
        <taxon>Pseudomonadota</taxon>
        <taxon>Gammaproteobacteria</taxon>
        <taxon>Vibrionales</taxon>
        <taxon>Vibrionaceae</taxon>
        <taxon>Vibrio</taxon>
    </lineage>
</organism>
<protein>
    <recommendedName>
        <fullName evidence="1">Putative phosphoenolpyruvate synthase regulatory protein</fullName>
        <shortName evidence="1">PEP synthase regulatory protein</shortName>
        <shortName evidence="1">PSRP</shortName>
        <ecNumber evidence="1">2.7.11.33</ecNumber>
        <ecNumber evidence="1">2.7.4.28</ecNumber>
    </recommendedName>
    <alternativeName>
        <fullName evidence="1">Pyruvate, water dikinase regulatory protein</fullName>
    </alternativeName>
</protein>
<evidence type="ECO:0000255" key="1">
    <source>
        <dbReference type="HAMAP-Rule" id="MF_01062"/>
    </source>
</evidence>
<comment type="function">
    <text evidence="1">Bifunctional serine/threonine kinase and phosphorylase involved in the regulation of the phosphoenolpyruvate synthase (PEPS) by catalyzing its phosphorylation/dephosphorylation.</text>
</comment>
<comment type="catalytic activity">
    <reaction evidence="1">
        <text>[pyruvate, water dikinase] + ADP = [pyruvate, water dikinase]-phosphate + AMP + H(+)</text>
        <dbReference type="Rhea" id="RHEA:46020"/>
        <dbReference type="Rhea" id="RHEA-COMP:11425"/>
        <dbReference type="Rhea" id="RHEA-COMP:11426"/>
        <dbReference type="ChEBI" id="CHEBI:15378"/>
        <dbReference type="ChEBI" id="CHEBI:43176"/>
        <dbReference type="ChEBI" id="CHEBI:68546"/>
        <dbReference type="ChEBI" id="CHEBI:456215"/>
        <dbReference type="ChEBI" id="CHEBI:456216"/>
        <dbReference type="EC" id="2.7.11.33"/>
    </reaction>
</comment>
<comment type="catalytic activity">
    <reaction evidence="1">
        <text>[pyruvate, water dikinase]-phosphate + phosphate + H(+) = [pyruvate, water dikinase] + diphosphate</text>
        <dbReference type="Rhea" id="RHEA:48580"/>
        <dbReference type="Rhea" id="RHEA-COMP:11425"/>
        <dbReference type="Rhea" id="RHEA-COMP:11426"/>
        <dbReference type="ChEBI" id="CHEBI:15378"/>
        <dbReference type="ChEBI" id="CHEBI:33019"/>
        <dbReference type="ChEBI" id="CHEBI:43176"/>
        <dbReference type="ChEBI" id="CHEBI:43474"/>
        <dbReference type="ChEBI" id="CHEBI:68546"/>
        <dbReference type="EC" id="2.7.4.28"/>
    </reaction>
</comment>
<comment type="similarity">
    <text evidence="1">Belongs to the pyruvate, phosphate/water dikinase regulatory protein family. PSRP subfamily.</text>
</comment>